<proteinExistence type="inferred from homology"/>
<keyword id="KW-1003">Cell membrane</keyword>
<keyword id="KW-1015">Disulfide bond</keyword>
<keyword id="KW-0297">G-protein coupled receptor</keyword>
<keyword id="KW-0325">Glycoprotein</keyword>
<keyword id="KW-0449">Lipoprotein</keyword>
<keyword id="KW-0472">Membrane</keyword>
<keyword id="KW-0564">Palmitate</keyword>
<keyword id="KW-0675">Receptor</keyword>
<keyword id="KW-0807">Transducer</keyword>
<keyword id="KW-0812">Transmembrane</keyword>
<keyword id="KW-1133">Transmembrane helix</keyword>
<comment type="function">
    <text evidence="1">This is a receptor for bradykinin. Could be a factor in chronic pain and inflammation.</text>
</comment>
<comment type="subcellular location">
    <subcellularLocation>
        <location evidence="1">Cell membrane</location>
        <topology evidence="2">Multi-pass membrane protein</topology>
    </subcellularLocation>
</comment>
<comment type="similarity">
    <text evidence="3">Belongs to the G-protein coupled receptor 1 family. Bradykinin receptor subfamily. BDKRB1 sub-subfamily.</text>
</comment>
<sequence length="352" mass="40303">MASWPPLELQSSNQSQLFPQNATACDNAPEAWDLLHRVLPTFIISICSFGLLGNLFVLLVFLLPRRRLNVAEIYLANLAASDLVFVLGLPFWAENIWNQFNWPFGALLCRGINGVIKANLFISIFLVVAISQDRYCLLVHPMASRRRQRRRQARVTCVLIWVVGGLLSIPTFLLRSIQAVPDLNITACILLLPHEAWHFARIVELNILAFLLPLAAIVFFNYHILASLRGREEVSRTRCGGRKDSKTTALILTLVVAFLVCWAPYHFFAFLEFLFQVQAIRSCFWEDFIDLGLQLANFLAFTNSSLNPVIYVFVGRLFRTKVWELYKQCTPKSLAPISSSHRKEIFQLFWRN</sequence>
<protein>
    <recommendedName>
        <fullName>B1 bradykinin receptor</fullName>
        <shortName>B1R</shortName>
        <shortName>BK-1 receptor</shortName>
    </recommendedName>
</protein>
<reference key="1">
    <citation type="submission" date="2002-08" db="EMBL/GenBank/DDBJ databases">
        <title>Orthologs of human receptors and methods of use.</title>
        <authorList>
            <person name="Horlick R.A."/>
            <person name="Zhao J."/>
            <person name="Swanson R.N."/>
            <person name="Webb M.L."/>
            <person name="Strohl B."/>
            <person name="Baldwin J.J."/>
            <person name="Auld D.S."/>
        </authorList>
    </citation>
    <scope>NUCLEOTIDE SEQUENCE [GENOMIC DNA]</scope>
</reference>
<feature type="chain" id="PRO_0000069180" description="B1 bradykinin receptor">
    <location>
        <begin position="1"/>
        <end position="352"/>
    </location>
</feature>
<feature type="topological domain" description="Extracellular" evidence="2">
    <location>
        <begin position="1"/>
        <end position="41"/>
    </location>
</feature>
<feature type="transmembrane region" description="Helical; Name=1" evidence="2">
    <location>
        <begin position="42"/>
        <end position="62"/>
    </location>
</feature>
<feature type="topological domain" description="Cytoplasmic" evidence="2">
    <location>
        <begin position="63"/>
        <end position="72"/>
    </location>
</feature>
<feature type="transmembrane region" description="Helical; Name=2" evidence="2">
    <location>
        <begin position="73"/>
        <end position="93"/>
    </location>
</feature>
<feature type="topological domain" description="Extracellular" evidence="2">
    <location>
        <begin position="94"/>
        <end position="110"/>
    </location>
</feature>
<feature type="transmembrane region" description="Helical; Name=3" evidence="2">
    <location>
        <begin position="111"/>
        <end position="131"/>
    </location>
</feature>
<feature type="topological domain" description="Cytoplasmic" evidence="2">
    <location>
        <begin position="132"/>
        <end position="153"/>
    </location>
</feature>
<feature type="transmembrane region" description="Helical; Name=4" evidence="2">
    <location>
        <begin position="154"/>
        <end position="174"/>
    </location>
</feature>
<feature type="topological domain" description="Extracellular" evidence="2">
    <location>
        <begin position="175"/>
        <end position="206"/>
    </location>
</feature>
<feature type="transmembrane region" description="Helical; Name=5" evidence="2">
    <location>
        <begin position="207"/>
        <end position="227"/>
    </location>
</feature>
<feature type="topological domain" description="Cytoplasmic" evidence="2">
    <location>
        <begin position="228"/>
        <end position="250"/>
    </location>
</feature>
<feature type="transmembrane region" description="Helical; Name=6" evidence="2">
    <location>
        <begin position="251"/>
        <end position="271"/>
    </location>
</feature>
<feature type="topological domain" description="Extracellular" evidence="2">
    <location>
        <begin position="272"/>
        <end position="294"/>
    </location>
</feature>
<feature type="transmembrane region" description="Helical; Name=7" evidence="2">
    <location>
        <begin position="295"/>
        <end position="315"/>
    </location>
</feature>
<feature type="topological domain" description="Cytoplasmic" evidence="2">
    <location>
        <begin position="316"/>
        <end position="352"/>
    </location>
</feature>
<feature type="lipid moiety-binding region" description="S-palmitoyl cysteine" evidence="2">
    <location>
        <position position="329"/>
    </location>
</feature>
<feature type="glycosylation site" description="N-linked (GlcNAc...) asparagine" evidence="2">
    <location>
        <position position="13"/>
    </location>
</feature>
<feature type="glycosylation site" description="N-linked (GlcNAc...) asparagine" evidence="2">
    <location>
        <position position="21"/>
    </location>
</feature>
<feature type="glycosylation site" description="N-linked (GlcNAc...) asparagine" evidence="2">
    <location>
        <position position="184"/>
    </location>
</feature>
<feature type="disulfide bond" evidence="3">
    <location>
        <begin position="109"/>
        <end position="188"/>
    </location>
</feature>
<accession>Q8HZP3</accession>
<gene>
    <name type="primary">BDKRB1</name>
</gene>
<organism>
    <name type="scientific">Chlorocebus pygerythrus</name>
    <name type="common">Vervet monkey</name>
    <name type="synonym">Cercopithecus pygerythrus</name>
    <dbReference type="NCBI Taxonomy" id="60710"/>
    <lineage>
        <taxon>Eukaryota</taxon>
        <taxon>Metazoa</taxon>
        <taxon>Chordata</taxon>
        <taxon>Craniata</taxon>
        <taxon>Vertebrata</taxon>
        <taxon>Euteleostomi</taxon>
        <taxon>Mammalia</taxon>
        <taxon>Eutheria</taxon>
        <taxon>Euarchontoglires</taxon>
        <taxon>Primates</taxon>
        <taxon>Haplorrhini</taxon>
        <taxon>Catarrhini</taxon>
        <taxon>Cercopithecidae</taxon>
        <taxon>Cercopithecinae</taxon>
        <taxon>Chlorocebus</taxon>
    </lineage>
</organism>
<evidence type="ECO:0000250" key="1">
    <source>
        <dbReference type="UniProtKB" id="P46663"/>
    </source>
</evidence>
<evidence type="ECO:0000255" key="2"/>
<evidence type="ECO:0000255" key="3">
    <source>
        <dbReference type="PROSITE-ProRule" id="PRU00521"/>
    </source>
</evidence>
<dbReference type="EMBL" id="AF540784">
    <property type="protein sequence ID" value="AAN16463.1"/>
    <property type="molecule type" value="Genomic_DNA"/>
</dbReference>
<dbReference type="SMR" id="Q8HZP3"/>
<dbReference type="GlyCosmos" id="Q8HZP3">
    <property type="glycosylation" value="3 sites, No reported glycans"/>
</dbReference>
<dbReference type="GO" id="GO:0009897">
    <property type="term" value="C:external side of plasma membrane"/>
    <property type="evidence" value="ECO:0007669"/>
    <property type="project" value="TreeGrafter"/>
</dbReference>
<dbReference type="GO" id="GO:0004947">
    <property type="term" value="F:bradykinin receptor activity"/>
    <property type="evidence" value="ECO:0007669"/>
    <property type="project" value="InterPro"/>
</dbReference>
<dbReference type="GO" id="GO:0019957">
    <property type="term" value="F:C-C chemokine binding"/>
    <property type="evidence" value="ECO:0007669"/>
    <property type="project" value="TreeGrafter"/>
</dbReference>
<dbReference type="GO" id="GO:0016493">
    <property type="term" value="F:C-C chemokine receptor activity"/>
    <property type="evidence" value="ECO:0007669"/>
    <property type="project" value="TreeGrafter"/>
</dbReference>
<dbReference type="GO" id="GO:0019722">
    <property type="term" value="P:calcium-mediated signaling"/>
    <property type="evidence" value="ECO:0007669"/>
    <property type="project" value="TreeGrafter"/>
</dbReference>
<dbReference type="GO" id="GO:0060326">
    <property type="term" value="P:cell chemotaxis"/>
    <property type="evidence" value="ECO:0007669"/>
    <property type="project" value="TreeGrafter"/>
</dbReference>
<dbReference type="GO" id="GO:0006955">
    <property type="term" value="P:immune response"/>
    <property type="evidence" value="ECO:0007669"/>
    <property type="project" value="TreeGrafter"/>
</dbReference>
<dbReference type="GO" id="GO:0006954">
    <property type="term" value="P:inflammatory response"/>
    <property type="evidence" value="ECO:0007669"/>
    <property type="project" value="InterPro"/>
</dbReference>
<dbReference type="GO" id="GO:0007204">
    <property type="term" value="P:positive regulation of cytosolic calcium ion concentration"/>
    <property type="evidence" value="ECO:0007669"/>
    <property type="project" value="TreeGrafter"/>
</dbReference>
<dbReference type="GO" id="GO:0009612">
    <property type="term" value="P:response to mechanical stimulus"/>
    <property type="evidence" value="ECO:0007669"/>
    <property type="project" value="InterPro"/>
</dbReference>
<dbReference type="FunFam" id="1.20.1070.10:FF:000295">
    <property type="entry name" value="B1 bradykinin receptor"/>
    <property type="match status" value="1"/>
</dbReference>
<dbReference type="Gene3D" id="1.20.1070.10">
    <property type="entry name" value="Rhodopsin 7-helix transmembrane proteins"/>
    <property type="match status" value="1"/>
</dbReference>
<dbReference type="InterPro" id="IPR001186">
    <property type="entry name" value="Brdyknn_1_rcpt"/>
</dbReference>
<dbReference type="InterPro" id="IPR000496">
    <property type="entry name" value="Brdyknn_rcpt"/>
</dbReference>
<dbReference type="InterPro" id="IPR050119">
    <property type="entry name" value="CCR1-9-like"/>
</dbReference>
<dbReference type="InterPro" id="IPR000276">
    <property type="entry name" value="GPCR_Rhodpsn"/>
</dbReference>
<dbReference type="InterPro" id="IPR017452">
    <property type="entry name" value="GPCR_Rhodpsn_7TM"/>
</dbReference>
<dbReference type="PANTHER" id="PTHR10489:SF957">
    <property type="entry name" value="B2 BRADYKININ RECEPTOR"/>
    <property type="match status" value="1"/>
</dbReference>
<dbReference type="PANTHER" id="PTHR10489">
    <property type="entry name" value="CELL ADHESION MOLECULE"/>
    <property type="match status" value="1"/>
</dbReference>
<dbReference type="Pfam" id="PF00001">
    <property type="entry name" value="7tm_1"/>
    <property type="match status" value="1"/>
</dbReference>
<dbReference type="PRINTS" id="PR00425">
    <property type="entry name" value="BRADYKININR"/>
</dbReference>
<dbReference type="PRINTS" id="PR00993">
    <property type="entry name" value="BRADYKINNB1R"/>
</dbReference>
<dbReference type="PRINTS" id="PR00237">
    <property type="entry name" value="GPCRRHODOPSN"/>
</dbReference>
<dbReference type="SUPFAM" id="SSF81321">
    <property type="entry name" value="Family A G protein-coupled receptor-like"/>
    <property type="match status" value="1"/>
</dbReference>
<dbReference type="PROSITE" id="PS50262">
    <property type="entry name" value="G_PROTEIN_RECEP_F1_2"/>
    <property type="match status" value="1"/>
</dbReference>
<name>BKRB1_CHLPG</name>